<gene>
    <name type="primary">SRP1</name>
    <name type="synonym">KAP60</name>
    <name type="ordered locus">YNL189W</name>
    <name type="ORF">N1606</name>
</gene>
<dbReference type="EMBL" id="M75849">
    <property type="protein sequence ID" value="AAA35090.1"/>
    <property type="molecule type" value="Genomic_DNA"/>
</dbReference>
<dbReference type="EMBL" id="Z71465">
    <property type="protein sequence ID" value="CAA96083.1"/>
    <property type="molecule type" value="Genomic_DNA"/>
</dbReference>
<dbReference type="EMBL" id="BK006947">
    <property type="protein sequence ID" value="DAA10364.1"/>
    <property type="molecule type" value="Genomic_DNA"/>
</dbReference>
<dbReference type="PIR" id="S30884">
    <property type="entry name" value="S30884"/>
</dbReference>
<dbReference type="RefSeq" id="NP_014210.1">
    <property type="nucleotide sequence ID" value="NM_001183027.1"/>
</dbReference>
<dbReference type="PDB" id="1BK5">
    <property type="method" value="X-ray"/>
    <property type="resolution" value="2.20 A"/>
    <property type="chains" value="A/B=89-510"/>
</dbReference>
<dbReference type="PDB" id="1BK6">
    <property type="method" value="X-ray"/>
    <property type="resolution" value="2.80 A"/>
    <property type="chains" value="A/B=89-510"/>
</dbReference>
<dbReference type="PDB" id="1EE4">
    <property type="method" value="X-ray"/>
    <property type="resolution" value="2.10 A"/>
    <property type="chains" value="A/B=87-509"/>
</dbReference>
<dbReference type="PDB" id="1EE5">
    <property type="method" value="X-ray"/>
    <property type="resolution" value="2.40 A"/>
    <property type="chains" value="A=87-510"/>
</dbReference>
<dbReference type="PDB" id="1UN0">
    <property type="method" value="X-ray"/>
    <property type="resolution" value="2.60 A"/>
    <property type="chains" value="A/B=88-530"/>
</dbReference>
<dbReference type="PDB" id="1WA5">
    <property type="method" value="X-ray"/>
    <property type="resolution" value="2.00 A"/>
    <property type="chains" value="B=1-530"/>
</dbReference>
<dbReference type="PDB" id="2C1T">
    <property type="method" value="X-ray"/>
    <property type="resolution" value="2.60 A"/>
    <property type="chains" value="A/B=88-541"/>
</dbReference>
<dbReference type="PDB" id="4PVZ">
    <property type="method" value="X-ray"/>
    <property type="resolution" value="2.50 A"/>
    <property type="chains" value="A/B=88-509"/>
</dbReference>
<dbReference type="PDB" id="4XZR">
    <property type="method" value="X-ray"/>
    <property type="resolution" value="2.25 A"/>
    <property type="chains" value="B=88-509"/>
</dbReference>
<dbReference type="PDB" id="5H2W">
    <property type="method" value="X-ray"/>
    <property type="resolution" value="2.50 A"/>
    <property type="chains" value="A/C=88-510"/>
</dbReference>
<dbReference type="PDB" id="5H2X">
    <property type="method" value="X-ray"/>
    <property type="resolution" value="2.20 A"/>
    <property type="chains" value="A=88-510"/>
</dbReference>
<dbReference type="PDB" id="5T94">
    <property type="method" value="X-ray"/>
    <property type="resolution" value="2.63 A"/>
    <property type="chains" value="B=1-542"/>
</dbReference>
<dbReference type="PDBsum" id="1BK5"/>
<dbReference type="PDBsum" id="1BK6"/>
<dbReference type="PDBsum" id="1EE4"/>
<dbReference type="PDBsum" id="1EE5"/>
<dbReference type="PDBsum" id="1UN0"/>
<dbReference type="PDBsum" id="1WA5"/>
<dbReference type="PDBsum" id="2C1T"/>
<dbReference type="PDBsum" id="4PVZ"/>
<dbReference type="PDBsum" id="4XZR"/>
<dbReference type="PDBsum" id="5H2W"/>
<dbReference type="PDBsum" id="5H2X"/>
<dbReference type="PDBsum" id="5T94"/>
<dbReference type="SMR" id="Q02821"/>
<dbReference type="BioGRID" id="35644">
    <property type="interactions" value="454"/>
</dbReference>
<dbReference type="ComplexPortal" id="CPX-1068">
    <property type="entry name" value="Importin complex, KAP60-KAP95"/>
</dbReference>
<dbReference type="DIP" id="DIP-728N"/>
<dbReference type="ELM" id="Q02821"/>
<dbReference type="FunCoup" id="Q02821">
    <property type="interactions" value="1482"/>
</dbReference>
<dbReference type="IntAct" id="Q02821">
    <property type="interactions" value="145"/>
</dbReference>
<dbReference type="MINT" id="Q02821"/>
<dbReference type="STRING" id="4932.YNL189W"/>
<dbReference type="GlyGen" id="Q02821">
    <property type="glycosylation" value="1 site"/>
</dbReference>
<dbReference type="iPTMnet" id="Q02821"/>
<dbReference type="PaxDb" id="4932-YNL189W"/>
<dbReference type="PeptideAtlas" id="Q02821"/>
<dbReference type="EnsemblFungi" id="YNL189W_mRNA">
    <property type="protein sequence ID" value="YNL189W"/>
    <property type="gene ID" value="YNL189W"/>
</dbReference>
<dbReference type="GeneID" id="855532"/>
<dbReference type="KEGG" id="sce:YNL189W"/>
<dbReference type="AGR" id="SGD:S000005133"/>
<dbReference type="SGD" id="S000005133">
    <property type="gene designation" value="SRP1"/>
</dbReference>
<dbReference type="VEuPathDB" id="FungiDB:YNL189W"/>
<dbReference type="eggNOG" id="KOG0166">
    <property type="taxonomic scope" value="Eukaryota"/>
</dbReference>
<dbReference type="GeneTree" id="ENSGT01050000244950"/>
<dbReference type="HOGENOM" id="CLU_018084_6_0_1"/>
<dbReference type="InParanoid" id="Q02821"/>
<dbReference type="OMA" id="EMIQMLY"/>
<dbReference type="OrthoDB" id="29145at2759"/>
<dbReference type="BioCyc" id="YEAST:G3O-33200-MONOMER"/>
<dbReference type="BioGRID-ORCS" id="855532">
    <property type="hits" value="2 hits in 10 CRISPR screens"/>
</dbReference>
<dbReference type="EvolutionaryTrace" id="Q02821"/>
<dbReference type="PRO" id="PR:Q02821"/>
<dbReference type="Proteomes" id="UP000002311">
    <property type="component" value="Chromosome XIV"/>
</dbReference>
<dbReference type="RNAct" id="Q02821">
    <property type="molecule type" value="protein"/>
</dbReference>
<dbReference type="GO" id="GO:0005737">
    <property type="term" value="C:cytoplasm"/>
    <property type="evidence" value="ECO:0000314"/>
    <property type="project" value="SGD"/>
</dbReference>
<dbReference type="GO" id="GO:0005829">
    <property type="term" value="C:cytosol"/>
    <property type="evidence" value="ECO:0000314"/>
    <property type="project" value="ComplexPortal"/>
</dbReference>
<dbReference type="GO" id="GO:0042564">
    <property type="term" value="C:NLS-dependent protein nuclear import complex"/>
    <property type="evidence" value="ECO:0000314"/>
    <property type="project" value="SGD"/>
</dbReference>
<dbReference type="GO" id="GO:0005635">
    <property type="term" value="C:nuclear envelope"/>
    <property type="evidence" value="ECO:0000314"/>
    <property type="project" value="ComplexPortal"/>
</dbReference>
<dbReference type="GO" id="GO:0005654">
    <property type="term" value="C:nucleoplasm"/>
    <property type="evidence" value="ECO:0000318"/>
    <property type="project" value="GO_Central"/>
</dbReference>
<dbReference type="GO" id="GO:0005634">
    <property type="term" value="C:nucleus"/>
    <property type="evidence" value="ECO:0000314"/>
    <property type="project" value="SGD"/>
</dbReference>
<dbReference type="GO" id="GO:0048471">
    <property type="term" value="C:perinuclear region of cytoplasm"/>
    <property type="evidence" value="ECO:0007669"/>
    <property type="project" value="UniProtKB-SubCell"/>
</dbReference>
<dbReference type="GO" id="GO:0032991">
    <property type="term" value="C:protein-containing complex"/>
    <property type="evidence" value="ECO:0000314"/>
    <property type="project" value="UniProtKB"/>
</dbReference>
<dbReference type="GO" id="GO:0097718">
    <property type="term" value="F:disordered domain specific binding"/>
    <property type="evidence" value="ECO:0000353"/>
    <property type="project" value="CAFA"/>
</dbReference>
<dbReference type="GO" id="GO:0061608">
    <property type="term" value="F:nuclear import signal receptor activity"/>
    <property type="evidence" value="ECO:0000314"/>
    <property type="project" value="SGD"/>
</dbReference>
<dbReference type="GO" id="GO:0008139">
    <property type="term" value="F:nuclear localization sequence binding"/>
    <property type="evidence" value="ECO:0000318"/>
    <property type="project" value="GO_Central"/>
</dbReference>
<dbReference type="GO" id="GO:0044877">
    <property type="term" value="F:protein-containing complex binding"/>
    <property type="evidence" value="ECO:0000314"/>
    <property type="project" value="SGD"/>
</dbReference>
<dbReference type="GO" id="GO:0051170">
    <property type="term" value="P:import into nucleus"/>
    <property type="evidence" value="ECO:0000303"/>
    <property type="project" value="ComplexPortal"/>
</dbReference>
<dbReference type="GO" id="GO:0006607">
    <property type="term" value="P:NLS-bearing protein import into nucleus"/>
    <property type="evidence" value="ECO:0000315"/>
    <property type="project" value="SGD"/>
</dbReference>
<dbReference type="GO" id="GO:0031144">
    <property type="term" value="P:proteasome localization"/>
    <property type="evidence" value="ECO:0000315"/>
    <property type="project" value="SGD"/>
</dbReference>
<dbReference type="GO" id="GO:0006606">
    <property type="term" value="P:protein import into nucleus"/>
    <property type="evidence" value="ECO:0000315"/>
    <property type="project" value="UniProtKB"/>
</dbReference>
<dbReference type="GO" id="GO:0006612">
    <property type="term" value="P:protein targeting to membrane"/>
    <property type="evidence" value="ECO:0000315"/>
    <property type="project" value="SGD"/>
</dbReference>
<dbReference type="DisProt" id="DP02227"/>
<dbReference type="FunFam" id="1.20.5.690:FF:000003">
    <property type="entry name" value="Importin subunit alpha"/>
    <property type="match status" value="1"/>
</dbReference>
<dbReference type="FunFam" id="1.25.10.10:FF:000021">
    <property type="entry name" value="Importin subunit alpha"/>
    <property type="match status" value="1"/>
</dbReference>
<dbReference type="Gene3D" id="1.20.5.690">
    <property type="entry name" value="Importin-alpha, importin-beta-binding domain"/>
    <property type="match status" value="1"/>
</dbReference>
<dbReference type="Gene3D" id="1.25.10.10">
    <property type="entry name" value="Leucine-rich Repeat Variant"/>
    <property type="match status" value="1"/>
</dbReference>
<dbReference type="IDEAL" id="IID50012"/>
<dbReference type="InterPro" id="IPR011989">
    <property type="entry name" value="ARM-like"/>
</dbReference>
<dbReference type="InterPro" id="IPR016024">
    <property type="entry name" value="ARM-type_fold"/>
</dbReference>
<dbReference type="InterPro" id="IPR032413">
    <property type="entry name" value="Arm_3"/>
</dbReference>
<dbReference type="InterPro" id="IPR000225">
    <property type="entry name" value="Armadillo"/>
</dbReference>
<dbReference type="InterPro" id="IPR002652">
    <property type="entry name" value="Importin-a_IBB"/>
</dbReference>
<dbReference type="InterPro" id="IPR036975">
    <property type="entry name" value="Importin-a_IBB_sf"/>
</dbReference>
<dbReference type="InterPro" id="IPR024931">
    <property type="entry name" value="Importin_alpha"/>
</dbReference>
<dbReference type="PANTHER" id="PTHR23316">
    <property type="entry name" value="IMPORTIN ALPHA"/>
    <property type="match status" value="1"/>
</dbReference>
<dbReference type="Pfam" id="PF00514">
    <property type="entry name" value="Arm"/>
    <property type="match status" value="8"/>
</dbReference>
<dbReference type="Pfam" id="PF16186">
    <property type="entry name" value="Arm_3"/>
    <property type="match status" value="1"/>
</dbReference>
<dbReference type="Pfam" id="PF01749">
    <property type="entry name" value="IBB"/>
    <property type="match status" value="1"/>
</dbReference>
<dbReference type="PIRSF" id="PIRSF005673">
    <property type="entry name" value="Importin_alpha"/>
    <property type="match status" value="1"/>
</dbReference>
<dbReference type="SMART" id="SM00185">
    <property type="entry name" value="ARM"/>
    <property type="match status" value="8"/>
</dbReference>
<dbReference type="SUPFAM" id="SSF48371">
    <property type="entry name" value="ARM repeat"/>
    <property type="match status" value="1"/>
</dbReference>
<dbReference type="PROSITE" id="PS50176">
    <property type="entry name" value="ARM_REPEAT"/>
    <property type="match status" value="2"/>
</dbReference>
<dbReference type="PROSITE" id="PS51214">
    <property type="entry name" value="IBB"/>
    <property type="match status" value="1"/>
</dbReference>
<accession>Q02821</accession>
<accession>D6W0Z8</accession>
<organism>
    <name type="scientific">Saccharomyces cerevisiae (strain ATCC 204508 / S288c)</name>
    <name type="common">Baker's yeast</name>
    <dbReference type="NCBI Taxonomy" id="559292"/>
    <lineage>
        <taxon>Eukaryota</taxon>
        <taxon>Fungi</taxon>
        <taxon>Dikarya</taxon>
        <taxon>Ascomycota</taxon>
        <taxon>Saccharomycotina</taxon>
        <taxon>Saccharomycetes</taxon>
        <taxon>Saccharomycetales</taxon>
        <taxon>Saccharomycetaceae</taxon>
        <taxon>Saccharomyces</taxon>
    </lineage>
</organism>
<evidence type="ECO:0000255" key="1">
    <source>
        <dbReference type="PROSITE-ProRule" id="PRU00259"/>
    </source>
</evidence>
<evidence type="ECO:0000255" key="2">
    <source>
        <dbReference type="PROSITE-ProRule" id="PRU00561"/>
    </source>
</evidence>
<evidence type="ECO:0000256" key="3">
    <source>
        <dbReference type="SAM" id="MobiDB-lite"/>
    </source>
</evidence>
<evidence type="ECO:0000269" key="4">
    <source>
    </source>
</evidence>
<evidence type="ECO:0000269" key="5">
    <source>
    </source>
</evidence>
<evidence type="ECO:0000269" key="6">
    <source>
    </source>
</evidence>
<evidence type="ECO:0000269" key="7">
    <source>
    </source>
</evidence>
<evidence type="ECO:0000269" key="8">
    <source>
    </source>
</evidence>
<evidence type="ECO:0000269" key="9">
    <source>
    </source>
</evidence>
<evidence type="ECO:0000269" key="10">
    <source>
    </source>
</evidence>
<evidence type="ECO:0000269" key="11">
    <source>
    </source>
</evidence>
<evidence type="ECO:0000269" key="12">
    <source>
    </source>
</evidence>
<evidence type="ECO:0000269" key="13">
    <source>
    </source>
</evidence>
<evidence type="ECO:0000269" key="14">
    <source>
    </source>
</evidence>
<evidence type="ECO:0000303" key="15">
    <source>
    </source>
</evidence>
<evidence type="ECO:0000305" key="16"/>
<evidence type="ECO:0007744" key="17">
    <source>
    </source>
</evidence>
<evidence type="ECO:0007829" key="18">
    <source>
        <dbReference type="PDB" id="1EE4"/>
    </source>
</evidence>
<evidence type="ECO:0007829" key="19">
    <source>
        <dbReference type="PDB" id="1UN0"/>
    </source>
</evidence>
<evidence type="ECO:0007829" key="20">
    <source>
        <dbReference type="PDB" id="1WA5"/>
    </source>
</evidence>
<evidence type="ECO:0007829" key="21">
    <source>
        <dbReference type="PDB" id="2C1T"/>
    </source>
</evidence>
<evidence type="ECO:0007829" key="22">
    <source>
        <dbReference type="PDB" id="5T94"/>
    </source>
</evidence>
<feature type="chain" id="PRO_0000120744" description="Importin subunit alpha">
    <location>
        <begin position="1"/>
        <end position="542"/>
    </location>
</feature>
<feature type="domain" description="IBB" evidence="2">
    <location>
        <begin position="1"/>
        <end position="65"/>
    </location>
</feature>
<feature type="repeat" description="ARM 1; truncated" evidence="1 14">
    <location>
        <begin position="89"/>
        <end position="122"/>
    </location>
</feature>
<feature type="repeat" description="ARM 2" evidence="1 14">
    <location>
        <begin position="123"/>
        <end position="162"/>
    </location>
</feature>
<feature type="repeat" description="ARM 3" evidence="1 14">
    <location>
        <begin position="163"/>
        <end position="204"/>
    </location>
</feature>
<feature type="repeat" description="ARM 4" evidence="1 14">
    <location>
        <begin position="205"/>
        <end position="251"/>
    </location>
</feature>
<feature type="repeat" description="ARM 5" evidence="1 14">
    <location>
        <begin position="252"/>
        <end position="288"/>
    </location>
</feature>
<feature type="repeat" description="ARM 6" evidence="1 14">
    <location>
        <begin position="289"/>
        <end position="330"/>
    </location>
</feature>
<feature type="repeat" description="ARM 7" evidence="1 14">
    <location>
        <begin position="331"/>
        <end position="372"/>
    </location>
</feature>
<feature type="repeat" description="ARM 8" evidence="1 14">
    <location>
        <begin position="373"/>
        <end position="417"/>
    </location>
</feature>
<feature type="repeat" description="ARM 9" evidence="1 14">
    <location>
        <begin position="418"/>
        <end position="471"/>
    </location>
</feature>
<feature type="repeat" description="ARM 10; atypical" evidence="1 14">
    <location>
        <begin position="472"/>
        <end position="508"/>
    </location>
</feature>
<feature type="region of interest" description="Disordered" evidence="3">
    <location>
        <begin position="1"/>
        <end position="77"/>
    </location>
</feature>
<feature type="region of interest" description="NLS binding site 1">
    <location>
        <begin position="209"/>
        <end position="335"/>
    </location>
</feature>
<feature type="region of interest" description="NLS binding site 2">
    <location>
        <begin position="419"/>
        <end position="505"/>
    </location>
</feature>
<feature type="compositionally biased region" description="Polar residues" evidence="3">
    <location>
        <begin position="1"/>
        <end position="11"/>
    </location>
</feature>
<feature type="compositionally biased region" description="Basic and acidic residues" evidence="3">
    <location>
        <begin position="27"/>
        <end position="53"/>
    </location>
</feature>
<feature type="modified residue" description="N-acetylmethionine" evidence="17">
    <location>
        <position position="1"/>
    </location>
</feature>
<feature type="mutagenesis site" description="In SRP1-31; temperature-sensitive mutant; reduced growth rate and chromosome loss." evidence="13">
    <original>S</original>
    <variation>F</variation>
    <location>
        <position position="116"/>
    </location>
</feature>
<feature type="mutagenesis site" description="In SRP1-49; temperature-sensitive mutant; alteration in nucleolar and microtubule morphology." evidence="13">
    <original>E</original>
    <variation>K</variation>
    <location>
        <position position="145"/>
    </location>
</feature>
<feature type="mutagenesis site" description="In SRP1-1; temperature-sensitive mutant." evidence="13">
    <original>P</original>
    <variation>Q</variation>
    <location>
        <position position="219"/>
    </location>
</feature>
<feature type="mutagenesis site" description="In SRP1-3; temperature-sensitive mutant." evidence="13">
    <original>D</original>
    <variation>N</variation>
    <location>
        <position position="286"/>
    </location>
</feature>
<feature type="mutagenesis site" description="In SRP1-2; temperature-sensitive mutant." evidence="13">
    <original>E</original>
    <variation>K</variation>
    <location>
        <position position="360"/>
    </location>
</feature>
<feature type="mutagenesis site" description="In SRP1-54; temperature-sensitive mutant; reduced growth rate." evidence="13">
    <original>G</original>
    <variation>V</variation>
    <location>
        <position position="459"/>
    </location>
</feature>
<feature type="helix" evidence="20">
    <location>
        <begin position="15"/>
        <end position="17"/>
    </location>
</feature>
<feature type="helix" evidence="20">
    <location>
        <begin position="89"/>
        <end position="97"/>
    </location>
</feature>
<feature type="helix" evidence="20">
    <location>
        <begin position="101"/>
        <end position="115"/>
    </location>
</feature>
<feature type="strand" evidence="18">
    <location>
        <begin position="118"/>
        <end position="120"/>
    </location>
</feature>
<feature type="helix" evidence="20">
    <location>
        <begin position="123"/>
        <end position="128"/>
    </location>
</feature>
<feature type="helix" evidence="20">
    <location>
        <begin position="132"/>
        <end position="137"/>
    </location>
</feature>
<feature type="strand" evidence="22">
    <location>
        <begin position="140"/>
        <end position="143"/>
    </location>
</feature>
<feature type="helix" evidence="20">
    <location>
        <begin position="145"/>
        <end position="158"/>
    </location>
</feature>
<feature type="helix" evidence="20">
    <location>
        <begin position="163"/>
        <end position="171"/>
    </location>
</feature>
<feature type="helix" evidence="20">
    <location>
        <begin position="175"/>
        <end position="184"/>
    </location>
</feature>
<feature type="helix" evidence="20">
    <location>
        <begin position="187"/>
        <end position="201"/>
    </location>
</feature>
<feature type="helix" evidence="20">
    <location>
        <begin position="205"/>
        <end position="213"/>
    </location>
</feature>
<feature type="helix" evidence="20">
    <location>
        <begin position="217"/>
        <end position="222"/>
    </location>
</feature>
<feature type="helix" evidence="20">
    <location>
        <begin position="223"/>
        <end position="225"/>
    </location>
</feature>
<feature type="helix" evidence="20">
    <location>
        <begin position="229"/>
        <end position="243"/>
    </location>
</feature>
<feature type="strand" evidence="20">
    <location>
        <begin position="246"/>
        <end position="248"/>
    </location>
</feature>
<feature type="helix" evidence="20">
    <location>
        <begin position="252"/>
        <end position="255"/>
    </location>
</feature>
<feature type="helix" evidence="20">
    <location>
        <begin position="256"/>
        <end position="258"/>
    </location>
</feature>
<feature type="helix" evidence="20">
    <location>
        <begin position="259"/>
        <end position="265"/>
    </location>
</feature>
<feature type="helix" evidence="20">
    <location>
        <begin position="271"/>
        <end position="284"/>
    </location>
</feature>
<feature type="strand" evidence="20">
    <location>
        <begin position="286"/>
        <end position="288"/>
    </location>
</feature>
<feature type="helix" evidence="20">
    <location>
        <begin position="289"/>
        <end position="297"/>
    </location>
</feature>
<feature type="helix" evidence="20">
    <location>
        <begin position="301"/>
        <end position="306"/>
    </location>
</feature>
<feature type="helix" evidence="20">
    <location>
        <begin position="307"/>
        <end position="309"/>
    </location>
</feature>
<feature type="helix" evidence="20">
    <location>
        <begin position="313"/>
        <end position="326"/>
    </location>
</feature>
<feature type="helix" evidence="20">
    <location>
        <begin position="331"/>
        <end position="339"/>
    </location>
</feature>
<feature type="helix" evidence="20">
    <location>
        <begin position="342"/>
        <end position="349"/>
    </location>
</feature>
<feature type="helix" evidence="20">
    <location>
        <begin position="355"/>
        <end position="369"/>
    </location>
</feature>
<feature type="helix" evidence="20">
    <location>
        <begin position="373"/>
        <end position="381"/>
    </location>
</feature>
<feature type="helix" evidence="20">
    <location>
        <begin position="385"/>
        <end position="394"/>
    </location>
</feature>
<feature type="helix" evidence="20">
    <location>
        <begin position="397"/>
        <end position="413"/>
    </location>
</feature>
<feature type="turn" evidence="20">
    <location>
        <begin position="414"/>
        <end position="416"/>
    </location>
</feature>
<feature type="helix" evidence="20">
    <location>
        <begin position="418"/>
        <end position="426"/>
    </location>
</feature>
<feature type="helix" evidence="20">
    <location>
        <begin position="430"/>
        <end position="436"/>
    </location>
</feature>
<feature type="turn" evidence="20">
    <location>
        <begin position="437"/>
        <end position="439"/>
    </location>
</feature>
<feature type="helix" evidence="20">
    <location>
        <begin position="442"/>
        <end position="466"/>
    </location>
</feature>
<feature type="helix" evidence="20">
    <location>
        <begin position="472"/>
        <end position="479"/>
    </location>
</feature>
<feature type="helix" evidence="20">
    <location>
        <begin position="482"/>
        <end position="488"/>
    </location>
</feature>
<feature type="helix" evidence="20">
    <location>
        <begin position="489"/>
        <end position="491"/>
    </location>
</feature>
<feature type="strand" evidence="21">
    <location>
        <begin position="492"/>
        <end position="494"/>
    </location>
</feature>
<feature type="helix" evidence="20">
    <location>
        <begin position="495"/>
        <end position="508"/>
    </location>
</feature>
<feature type="turn" evidence="19">
    <location>
        <begin position="510"/>
        <end position="512"/>
    </location>
</feature>
<name>IMA1_YEAST</name>
<sequence length="542" mass="60441">MDNGTDSSTSKFVPEYRRTNFKNKGRFSADELRRRRDTQQVELRKAKRDEALAKRRNFIPPTDGADSDEEDESSVSADQQFYSQLQQELPQMTQQLNSDDMQEQLSATVKFRQILSREHRPPIDVVIQAGVVPRLVEFMRENQPEMLQLEAAWALTNIASGTSAQTKVVVDADAVPLFIQLLYTGSVEVKEQAIWALGNVAGDSTDYRDYVLQCNAMEPILGLFNSNKPSLIRTATWTLSNLCRGKKPQPDWSVVSQALPTLAKLIYSMDTETLVDACWAISYLSDGPQEAIQAVIDVRIPKRLVELLSHESTLVQTPALRAVGNIVTGNDLQTQVVINAGVLPALRLLLSSPKENIKKEACWTISNITAGNTEQIQAVIDANLIPPLVKLLEVAEYKTKKEACWAISNASSGGLQRPDIIRYLVSQGCIKPLCDLLEIADNRIIEVTLDALENILKMGEADKEARGLNINENADFIEKAGGMEKIFNCQQNENDKIYEKAYKIIETYFGEEEDAVDETMAPQNAGNTFGFGSNVNQQFNFN</sequence>
<keyword id="KW-0002">3D-structure</keyword>
<keyword id="KW-0007">Acetylation</keyword>
<keyword id="KW-0963">Cytoplasm</keyword>
<keyword id="KW-0653">Protein transport</keyword>
<keyword id="KW-1185">Reference proteome</keyword>
<keyword id="KW-0677">Repeat</keyword>
<keyword id="KW-0813">Transport</keyword>
<proteinExistence type="evidence at protein level"/>
<protein>
    <recommendedName>
        <fullName>Importin subunit alpha</fullName>
    </recommendedName>
    <alternativeName>
        <fullName>Karyopherin subunit alpha</fullName>
    </alternativeName>
    <alternativeName>
        <fullName>Karyopherin-60</fullName>
    </alternativeName>
    <alternativeName>
        <fullName>Serine-rich RNA polymerase I suppressor protein</fullName>
    </alternativeName>
</protein>
<reference key="1">
    <citation type="journal article" date="1992" name="Mol. Cell. Biol.">
        <title>Cloning and characterization of SRP1, a suppressor of temperature-sensitive RNA polymerase I mutations, in Saccharomyces cerevisiae.</title>
        <authorList>
            <person name="Yano R."/>
            <person name="Oakes M."/>
            <person name="Yamaghishi M."/>
            <person name="Dodd J.A."/>
            <person name="Nomura M."/>
        </authorList>
    </citation>
    <scope>NUCLEOTIDE SEQUENCE [GENOMIC DNA]</scope>
</reference>
<reference key="2">
    <citation type="journal article" date="1995" name="Mol. Gen. Genet.">
        <title>Yeast Srp1, a nuclear protein related to Drosophila and mouse pendulin, is required for normal migration, division, and integrity of nuclei during mitosis.</title>
        <authorList>
            <person name="Kuessel P."/>
            <person name="Frasch M."/>
        </authorList>
    </citation>
    <scope>NUCLEOTIDE SEQUENCE [GENOMIC DNA]</scope>
    <source>
        <strain>ATCC 200060 / W303</strain>
    </source>
</reference>
<reference key="3">
    <citation type="journal article" date="1997" name="Nature">
        <title>The nucleotide sequence of Saccharomyces cerevisiae chromosome XIV and its evolutionary implications.</title>
        <authorList>
            <person name="Philippsen P."/>
            <person name="Kleine K."/>
            <person name="Poehlmann R."/>
            <person name="Duesterhoeft A."/>
            <person name="Hamberg K."/>
            <person name="Hegemann J.H."/>
            <person name="Obermaier B."/>
            <person name="Urrestarazu L.A."/>
            <person name="Aert R."/>
            <person name="Albermann K."/>
            <person name="Altmann R."/>
            <person name="Andre B."/>
            <person name="Baladron V."/>
            <person name="Ballesta J.P.G."/>
            <person name="Becam A.-M."/>
            <person name="Beinhauer J.D."/>
            <person name="Boskovic J."/>
            <person name="Buitrago M.J."/>
            <person name="Bussereau F."/>
            <person name="Coster F."/>
            <person name="Crouzet M."/>
            <person name="D'Angelo M."/>
            <person name="Dal Pero F."/>
            <person name="De Antoni A."/>
            <person name="del Rey F."/>
            <person name="Doignon F."/>
            <person name="Domdey H."/>
            <person name="Dubois E."/>
            <person name="Fiedler T.A."/>
            <person name="Fleig U."/>
            <person name="Floeth M."/>
            <person name="Fritz C."/>
            <person name="Gaillardin C."/>
            <person name="Garcia-Cantalejo J.M."/>
            <person name="Glansdorff N."/>
            <person name="Goffeau A."/>
            <person name="Gueldener U."/>
            <person name="Herbert C.J."/>
            <person name="Heumann K."/>
            <person name="Heuss-Neitzel D."/>
            <person name="Hilbert H."/>
            <person name="Hinni K."/>
            <person name="Iraqui Houssaini I."/>
            <person name="Jacquet M."/>
            <person name="Jimenez A."/>
            <person name="Jonniaux J.-L."/>
            <person name="Karpfinger-Hartl L."/>
            <person name="Lanfranchi G."/>
            <person name="Lepingle A."/>
            <person name="Levesque H."/>
            <person name="Lyck R."/>
            <person name="Maftahi M."/>
            <person name="Mallet L."/>
            <person name="Maurer C.T.C."/>
            <person name="Messenguy F."/>
            <person name="Mewes H.-W."/>
            <person name="Moestl D."/>
            <person name="Nasr F."/>
            <person name="Nicaud J.-M."/>
            <person name="Niedenthal R.K."/>
            <person name="Pandolfo D."/>
            <person name="Pierard A."/>
            <person name="Piravandi E."/>
            <person name="Planta R.J."/>
            <person name="Pohl T.M."/>
            <person name="Purnelle B."/>
            <person name="Rebischung C."/>
            <person name="Remacha M.A."/>
            <person name="Revuelta J.L."/>
            <person name="Rinke M."/>
            <person name="Saiz J.E."/>
            <person name="Sartorello F."/>
            <person name="Scherens B."/>
            <person name="Sen-Gupta M."/>
            <person name="Soler-Mira A."/>
            <person name="Urbanus J.H.M."/>
            <person name="Valle G."/>
            <person name="Van Dyck L."/>
            <person name="Verhasselt P."/>
            <person name="Vierendeels F."/>
            <person name="Vissers S."/>
            <person name="Voet M."/>
            <person name="Volckaert G."/>
            <person name="Wach A."/>
            <person name="Wambutt R."/>
            <person name="Wedler H."/>
            <person name="Zollner A."/>
            <person name="Hani J."/>
        </authorList>
    </citation>
    <scope>NUCLEOTIDE SEQUENCE [LARGE SCALE GENOMIC DNA]</scope>
    <source>
        <strain>ATCC 204508 / S288c</strain>
    </source>
</reference>
<reference key="4">
    <citation type="journal article" date="2014" name="G3 (Bethesda)">
        <title>The reference genome sequence of Saccharomyces cerevisiae: Then and now.</title>
        <authorList>
            <person name="Engel S.R."/>
            <person name="Dietrich F.S."/>
            <person name="Fisk D.G."/>
            <person name="Binkley G."/>
            <person name="Balakrishnan R."/>
            <person name="Costanzo M.C."/>
            <person name="Dwight S.S."/>
            <person name="Hitz B.C."/>
            <person name="Karra K."/>
            <person name="Nash R.S."/>
            <person name="Weng S."/>
            <person name="Wong E.D."/>
            <person name="Lloyd P."/>
            <person name="Skrzypek M.S."/>
            <person name="Miyasato S.R."/>
            <person name="Simison M."/>
            <person name="Cherry J.M."/>
        </authorList>
    </citation>
    <scope>GENOME REANNOTATION</scope>
    <source>
        <strain>ATCC 204508 / S288c</strain>
    </source>
</reference>
<reference key="5">
    <citation type="journal article" date="1994" name="Proc. Natl. Acad. Sci. U.S.A.">
        <title>Yeast Srp1p has homology to armadillo/plakoglobin/beta-catenin and participates in apparently multiple nuclear functions including the maintenance of the nucleolar structure.</title>
        <authorList>
            <person name="Yano R."/>
            <person name="Oakes M.L."/>
            <person name="Tabb M.M."/>
            <person name="Nomura M."/>
        </authorList>
    </citation>
    <scope>MUTAGENESIS</scope>
</reference>
<reference key="6">
    <citation type="journal article" date="1995" name="J. Biol. Chem.">
        <title>Identification of a yeast karyopherin heterodimer that targets import substrate to mammalian nuclear pore complexes.</title>
        <authorList>
            <person name="Enenkel C."/>
            <person name="Blobel G."/>
            <person name="Rexach M."/>
        </authorList>
    </citation>
    <scope>IDENTIFICATION</scope>
</reference>
<reference key="7">
    <citation type="journal article" date="1995" name="Cell">
        <title>Protein import into nuclei: association and dissociation reactions involving transport substrate, transport factors, and nucleoporins.</title>
        <authorList>
            <person name="Rexach M."/>
            <person name="Blobel G."/>
        </authorList>
    </citation>
    <scope>NUCLEOPORIN REPEAT BINDING REQUIREMENT</scope>
    <scope>FUNCTION</scope>
</reference>
<reference key="8">
    <citation type="journal article" date="2000" name="Mol. Cell. Biol.">
        <title>Evidence for separable functions of Srp1p, the yeast homolog of importin alpha (Karyopherin alpha): role for Srp1p and Sts1p in protein degradation.</title>
        <authorList>
            <person name="Tabb M.M."/>
            <person name="Tongaonkar P."/>
            <person name="Vu L."/>
            <person name="Nomura M."/>
        </authorList>
    </citation>
    <scope>FUNCTION</scope>
    <scope>INTERACTION WITH STS1</scope>
</reference>
<reference key="9">
    <citation type="journal article" date="2004" name="Mol. Genet. Genomics">
        <title>Nuclear import of yeast Gcn4p requires karyopherins Srp1p and Kap95p.</title>
        <authorList>
            <person name="Pries R."/>
            <person name="Boemeke K."/>
            <person name="Draht O."/>
            <person name="Kuenzler M."/>
            <person name="Braus G.H."/>
        </authorList>
    </citation>
    <scope>FUNCTION</scope>
    <source>
        <strain evidence="15">ATCC 200060 / W303</strain>
    </source>
</reference>
<reference key="10">
    <citation type="journal article" date="2003" name="Nature">
        <title>Global analysis of protein expression in yeast.</title>
        <authorList>
            <person name="Ghaemmaghami S."/>
            <person name="Huh W.-K."/>
            <person name="Bower K."/>
            <person name="Howson R.W."/>
            <person name="Belle A."/>
            <person name="Dephoure N."/>
            <person name="O'Shea E.K."/>
            <person name="Weissman J.S."/>
        </authorList>
    </citation>
    <scope>LEVEL OF PROTEIN EXPRESSION [LARGE SCALE ANALYSIS]</scope>
</reference>
<reference key="11">
    <citation type="journal article" date="2006" name="Nature">
        <title>Karyopherin-mediated import of integral inner nuclear membrane proteins.</title>
        <authorList>
            <person name="King M.C."/>
            <person name="Lusk C.P."/>
            <person name="Blobel G."/>
        </authorList>
    </citation>
    <scope>INTERACTION WITH HEH2</scope>
</reference>
<reference key="12">
    <citation type="journal article" date="2007" name="J. Proteome Res.">
        <title>Large-scale phosphorylation analysis of alpha-factor-arrested Saccharomyces cerevisiae.</title>
        <authorList>
            <person name="Li X."/>
            <person name="Gerber S.A."/>
            <person name="Rudner A.D."/>
            <person name="Beausoleil S.A."/>
            <person name="Haas W."/>
            <person name="Villen J."/>
            <person name="Elias J.E."/>
            <person name="Gygi S.P."/>
        </authorList>
    </citation>
    <scope>IDENTIFICATION BY MASS SPECTROMETRY [LARGE SCALE ANALYSIS]</scope>
    <source>
        <strain>ADR376</strain>
    </source>
</reference>
<reference key="13">
    <citation type="journal article" date="2009" name="Mol. Biol. Cell">
        <title>Nuclear shuttling of She2p couples ASH1 mRNA localization to its translational repression by recruiting Loc1p and Puf6p.</title>
        <authorList>
            <person name="Shen Z."/>
            <person name="Paquin N."/>
            <person name="Forget A."/>
            <person name="Chartrand P."/>
        </authorList>
    </citation>
    <scope>INTERACTION WITH SHE2</scope>
</reference>
<reference key="14">
    <citation type="journal article" date="2011" name="J. Biol. Chem.">
        <title>Sts1 plays a key role in targeting proteasomes to the nucleus.</title>
        <authorList>
            <person name="Chen L."/>
            <person name="Romero L."/>
            <person name="Chuang S.M."/>
            <person name="Tournier V."/>
            <person name="Joshi K.K."/>
            <person name="Lee J.A."/>
            <person name="Kovvali G."/>
            <person name="Madura K."/>
        </authorList>
    </citation>
    <scope>FUNCTION</scope>
    <scope>INTERACTION WITH STS1</scope>
</reference>
<reference key="15">
    <citation type="journal article" date="2012" name="Proc. Natl. Acad. Sci. U.S.A.">
        <title>N-terminal acetylome analyses and functional insights of the N-terminal acetyltransferase NatB.</title>
        <authorList>
            <person name="Van Damme P."/>
            <person name="Lasa M."/>
            <person name="Polevoda B."/>
            <person name="Gazquez C."/>
            <person name="Elosegui-Artola A."/>
            <person name="Kim D.S."/>
            <person name="De Juan-Pardo E."/>
            <person name="Demeyer K."/>
            <person name="Hole K."/>
            <person name="Larrea E."/>
            <person name="Timmerman E."/>
            <person name="Prieto J."/>
            <person name="Arnesen T."/>
            <person name="Sherman F."/>
            <person name="Gevaert K."/>
            <person name="Aldabe R."/>
        </authorList>
    </citation>
    <scope>ACETYLATION [LARGE SCALE ANALYSIS] AT MET-1</scope>
    <scope>IDENTIFICATION BY MASS SPECTROMETRY [LARGE SCALE ANALYSIS]</scope>
</reference>
<reference key="16">
    <citation type="journal article" date="1998" name="Cell">
        <title>Crystallographic analysis of the recognition of a nuclear localization signal by the nuclear import factor karyopherin alpha.</title>
        <authorList>
            <person name="Conti E."/>
            <person name="Uy M."/>
            <person name="Leighton L."/>
            <person name="Blobel G."/>
            <person name="Kuriyan J."/>
        </authorList>
    </citation>
    <scope>X-RAY CRYSTALLOGRAPHY (2.2 ANGSTROMS) OF 89-510</scope>
</reference>
<reference key="17">
    <citation type="journal article" date="2000" name="Structure">
        <title>Crystallographic analysis of the specific yet versatile recognition of distinct nuclear localization signals by karyopherin alpha.</title>
        <authorList>
            <person name="Conti E."/>
            <person name="Kuriyan J."/>
        </authorList>
    </citation>
    <scope>X-RAY CRYSTALLOGRAPHY (2.1 ANGSTROMS) OF 87-509 IN COMPLEX WITH NLS PEPTIDE</scope>
    <scope>FUNCTION</scope>
</reference>
<reference key="18">
    <citation type="journal article" date="2003" name="EMBO J.">
        <title>Structural basis for Nup2p function in cargo release and karyopherin recycling in nuclear import.</title>
        <authorList>
            <person name="Matsuura Y."/>
            <person name="Lange A."/>
            <person name="Harreman M.T."/>
            <person name="Corbett A.H."/>
            <person name="Stewart M."/>
        </authorList>
    </citation>
    <scope>X-RAY CRYSTALLOGRAPHY (2.6 ANGSTROMS) OF 88-530 IN COMPLEX WITH NUP2</scope>
</reference>
<reference key="19">
    <citation type="journal article" date="2004" name="Nature">
        <title>Structural basis for the assembly of a nuclear export complex.</title>
        <authorList>
            <person name="Matsuura Y."/>
            <person name="Stewart M."/>
        </authorList>
    </citation>
    <scope>X-RAY CRYSTALLOGRAPHY (2.0 ANGSTROMS) OF 1-530 IN COMPLEX WITH CSE1 AND RANGTP</scope>
</reference>
<comment type="function">
    <text evidence="4 5 8 12 14">Functions in nuclear protein import as an adapter protein for importin beta nuclear receptors (PubMed:10913188). Binds specifically and directly to substrates containing either a simple or bipartite NLS motif (PubMed:10745017). Promotes docking of import substrates to the nuclear envelope (PubMed:8521485). Together with importin beta KAP95, mediates nuclear import of transcription factor GCN4 (PubMed:14648200). Together with tethering factor STS1, targets the proteasome to the nucleus (PubMed:10913188, PubMed:21075847).</text>
</comment>
<comment type="subunit">
    <text evidence="4 5 6 9 10 11 12">Forms a complex with an importin beta subunit. In the nucleus, interacts with NUP2 which accelerate release of NLSs, NUP2 is subsequently displaced by CSE1:RanGTP which mediates re-export and recycling. Interacts with HEH2, SHE2, and STS1.</text>
</comment>
<comment type="interaction">
    <interactant intactId="EBI-1797">
        <id>Q02821</id>
    </interactant>
    <interactant intactId="EBI-33556">
        <id>Q08920</id>
        <label>CBC2</label>
    </interactant>
    <organismsDiffer>false</organismsDiffer>
    <experiments>3</experiments>
</comment>
<comment type="interaction">
    <interactant intactId="EBI-1797">
        <id>Q02821</id>
    </interactant>
    <interactant intactId="EBI-5168">
        <id>P33307</id>
        <label>CSE1</label>
    </interactant>
    <organismsDiffer>false</organismsDiffer>
    <experiments>2</experiments>
</comment>
<comment type="interaction">
    <interactant intactId="EBI-1797">
        <id>Q02821</id>
    </interactant>
    <interactant intactId="EBI-22131">
        <id>Q03281</id>
        <label>HEH2</label>
    </interactant>
    <organismsDiffer>false</organismsDiffer>
    <experiments>7</experiments>
</comment>
<comment type="interaction">
    <interactant intactId="EBI-1797">
        <id>Q02821</id>
    </interactant>
    <interactant intactId="EBI-8666">
        <id>P15108</id>
        <label>HSC82</label>
    </interactant>
    <organismsDiffer>false</organismsDiffer>
    <experiments>2</experiments>
</comment>
<comment type="interaction">
    <interactant intactId="EBI-1797">
        <id>Q02821</id>
    </interactant>
    <interactant intactId="EBI-9145">
        <id>Q06142</id>
        <label>KAP95</label>
    </interactant>
    <organismsDiffer>false</organismsDiffer>
    <experiments>10</experiments>
</comment>
<comment type="interaction">
    <interactant intactId="EBI-1797">
        <id>Q02821</id>
    </interactant>
    <interactant intactId="EBI-12401">
        <id>P32499</id>
        <label>NUP2</label>
    </interactant>
    <organismsDiffer>false</organismsDiffer>
    <experiments>5</experiments>
</comment>
<comment type="interaction">
    <interactant intactId="EBI-1797">
        <id>Q02821</id>
    </interactant>
    <interactant intactId="EBI-18064">
        <id>Q03707</id>
        <label>SRC1</label>
    </interactant>
    <organismsDiffer>false</organismsDiffer>
    <experiments>5</experiments>
</comment>
<comment type="interaction">
    <interactant intactId="EBI-1797">
        <id>Q02821</id>
    </interactant>
    <interactant intactId="EBI-7261813">
        <id>P05221</id>
    </interactant>
    <organismsDiffer>true</organismsDiffer>
    <experiments>2</experiments>
</comment>
<comment type="subcellular location">
    <subcellularLocation>
        <location>Cytoplasm</location>
        <location>Perinuclear region</location>
    </subcellularLocation>
    <text>Mainly localized at the periphery of the nucleus.</text>
</comment>
<comment type="domain">
    <text>The NLS binding sites are mainly involved in recognition of simple or bipartite NLS motifs. Structurally located within in a helical surface groove they contain several conserved Trp and Asn residues of the corresponding third helices (H3) of ARM repeats which mainly contribute to binding.</text>
</comment>
<comment type="miscellaneous">
    <text>Binds to nucleoporin FxFG but not GLFG repeat regions. Ran-GTP can disrupt the karyopherin heterodimer by binding to the beta subunit and releases both subunits from the docking site.</text>
</comment>
<comment type="miscellaneous">
    <text evidence="7">Present with 2790 molecules/cell in log phase SD medium.</text>
</comment>
<comment type="similarity">
    <text evidence="16">Belongs to the importin alpha family.</text>
</comment>